<protein>
    <recommendedName>
        <fullName>Uncharacterized membrane protein ycf78</fullName>
    </recommendedName>
    <alternativeName>
        <fullName>RF1</fullName>
    </alternativeName>
    <alternativeName>
        <fullName>ycf1</fullName>
    </alternativeName>
</protein>
<comment type="subcellular location">
    <subcellularLocation>
        <location evidence="3">Plastid</location>
        <location evidence="3">Chloroplast membrane</location>
        <topology evidence="3">Multi-pass membrane protein</topology>
    </subcellularLocation>
</comment>
<comment type="similarity">
    <text evidence="3">Belongs to the ycf78 family.</text>
</comment>
<comment type="caution">
    <text evidence="3">This protein is much longer than its orthologs.</text>
</comment>
<reference key="1">
    <citation type="journal article" date="2006" name="Mol. Genet. Genomics">
        <title>Distinctive architecture of the chloroplast genome in the chlorophycean green alga Stigeoclonium helveticum.</title>
        <authorList>
            <person name="Belanger A.-S."/>
            <person name="Brouard J.-S."/>
            <person name="Charlebois P."/>
            <person name="Otis C."/>
            <person name="Lemieux C."/>
            <person name="Turmel M."/>
        </authorList>
    </citation>
    <scope>NUCLEOTIDE SEQUENCE [LARGE SCALE GENOMIC DNA]</scope>
    <source>
        <strain>UTEX 441</strain>
    </source>
</reference>
<evidence type="ECO:0000255" key="1"/>
<evidence type="ECO:0000256" key="2">
    <source>
        <dbReference type="SAM" id="MobiDB-lite"/>
    </source>
</evidence>
<evidence type="ECO:0000305" key="3"/>
<accession>Q06SH2</accession>
<organism>
    <name type="scientific">Stigeoclonium helveticum</name>
    <name type="common">Green alga</name>
    <dbReference type="NCBI Taxonomy" id="55999"/>
    <lineage>
        <taxon>Eukaryota</taxon>
        <taxon>Viridiplantae</taxon>
        <taxon>Chlorophyta</taxon>
        <taxon>core chlorophytes</taxon>
        <taxon>Chlorophyceae</taxon>
        <taxon>OCC clade</taxon>
        <taxon>Chaetophorales</taxon>
        <taxon>Chaetophoraceae</taxon>
        <taxon>Stigeoclonium</taxon>
    </lineage>
</organism>
<geneLocation type="chloroplast"/>
<feature type="chain" id="PRO_0000262634" description="Uncharacterized membrane protein ycf78">
    <location>
        <begin position="1"/>
        <end position="3707"/>
    </location>
</feature>
<feature type="transmembrane region" description="Helical" evidence="1">
    <location>
        <begin position="117"/>
        <end position="137"/>
    </location>
</feature>
<feature type="transmembrane region" description="Helical" evidence="1">
    <location>
        <begin position="152"/>
        <end position="172"/>
    </location>
</feature>
<feature type="transmembrane region" description="Helical" evidence="1">
    <location>
        <begin position="174"/>
        <end position="194"/>
    </location>
</feature>
<feature type="transmembrane region" description="Helical" evidence="1">
    <location>
        <begin position="222"/>
        <end position="242"/>
    </location>
</feature>
<feature type="transmembrane region" description="Helical" evidence="1">
    <location>
        <begin position="269"/>
        <end position="289"/>
    </location>
</feature>
<feature type="transmembrane region" description="Helical" evidence="1">
    <location>
        <begin position="318"/>
        <end position="338"/>
    </location>
</feature>
<feature type="region of interest" description="Disordered" evidence="2">
    <location>
        <begin position="3139"/>
        <end position="3164"/>
    </location>
</feature>
<feature type="region of interest" description="Disordered" evidence="2">
    <location>
        <begin position="3583"/>
        <end position="3612"/>
    </location>
</feature>
<feature type="compositionally biased region" description="Basic residues" evidence="2">
    <location>
        <begin position="3140"/>
        <end position="3149"/>
    </location>
</feature>
<dbReference type="EMBL" id="DQ630521">
    <property type="protein sequence ID" value="ABF60203.1"/>
    <property type="molecule type" value="Genomic_DNA"/>
</dbReference>
<dbReference type="RefSeq" id="YP_764394.1">
    <property type="nucleotide sequence ID" value="NC_008372.1"/>
</dbReference>
<dbReference type="GeneID" id="4308434"/>
<dbReference type="GO" id="GO:0031969">
    <property type="term" value="C:chloroplast membrane"/>
    <property type="evidence" value="ECO:0007669"/>
    <property type="project" value="UniProtKB-SubCell"/>
</dbReference>
<keyword id="KW-0150">Chloroplast</keyword>
<keyword id="KW-0472">Membrane</keyword>
<keyword id="KW-0934">Plastid</keyword>
<keyword id="KW-0812">Transmembrane</keyword>
<keyword id="KW-1133">Transmembrane helix</keyword>
<gene>
    <name type="primary">ycf78</name>
    <name type="synonym">ycf1</name>
</gene>
<name>YCF78_STIHE</name>
<sequence>MTVLYLVKDYIEVVHKLIETSPSHVLQHSTYNDSLTIINFGLSTLKQLCSNFFSFEWLKQLWYFPIIVPEIATSMMEEISVLDGNFHNILSFLDKPVAVGNEIYGDYYLPLTCFEKIFTGLVNSLFIWIPTSTATFLCFRRFIMQGVEAGYAAALGTMAATVFWLASILFGLRFIVVPWMSLDLFRYWLGFLLLMKYFWDNRYAYKEVKHNSVFGKKTKRNIFGFHFLLALTEQTSLYPFLSNFSISSQSTLLEGFPSENILDFSLIHFSYLLGIGIGSYSLINLICWFWQDPAYRFYFWMMNKFKKLRIADIVRPVHLFFQSITVLFAFSSLPYFGIEYQITNPLGFLPNDQAFHQFKQTSFLTHPTSPAYYRSRLNFPRQKFFRYEDWAEYYHRNTPLDTSLYDQGAYRLYTMEDLSYGKDYEWMRRRSDKIKIRSRLKRLRWFPRNWANRLWEFTKTWSRRNVLWRNDILNMYQYSWDSKAPIIWNKLVFEEFFPTTFGQQKSFSRKETELKKHLGSEVLFSSTKKPISTNWDSFWGPDPDWTSKFLWNQNSLNNKEKQLWFNWQSRLNLTDNDTWWKWLVTNGSKSKAETLSFQNIIPQFSNKIQKGDFWEPQKRLISIYSENSQKKELVLESSTLRKFVRKLSARFKLAQIDKVSQLNNAEKKEVKTSFFLQPLNNGIWYNSNTLSSNSLKTLLLTPSFRDWTVFQTVMTNMNRILWWRRLTNASKSKSTDLSGKLSYQFDPKMKLKTLNQRLDGKKEEAKASSFLQLSTFSKPNNFLSNSALNNFKRFVKTQKLSYSENKFAKIQNKYLEIQMKQNLLINSNSSNKNNLSSLFSPSKTIEQFENKELKKETSSSLLPFAISPLSQSKNYKNMEINNLKVLNGKKSGAKWEKEKSLRRGKKLSFFPLLPISSLSPREKSSFSLEERENMGHFPPEAKLPGEPSFAFPTLFLTKKNNNKFILFKNKNKVNVNKWVPLNSVDVSSTLLHPLKYYLHKEQNFKRKLSFYGVKNKILSKSIKDSSSILNENGNERKAGALATNFSSQETKISSFPQNVSKTSSTDLFYSTYNTGSSLKSYPEATINQNQNWNSLSLKKNNYSEKLFPITKNKNKLPIFNFYLKTYFQTYKKTKLYVLNTKMKRQLGMGASARRKGRDYSNKLLKRSKILSNTPWIRQWIDQSGFLARRKRLETWIARQHYDPNELWSKIMKVDVDLFMNRQPSYYFLTNTEEKLLHLRRFLLFEHYDSLRWYTYMTNYRTMKNTIGGTKSFTNRMYNQQFKGTFHKVRHLFSLTPSSSNGSLLKFDRPLYNLEKTNQSSLTSQAHEELQNFTNFLKHDDNVLSEIDDFREKLLEKKAKAFFSNNDGEKSEAKASTVPQSFLNKSIGKMQENQSDASFFKASPTLEKNSIFSSETFLSSFEKRPMDLIEKSTQTLQQSIWENNLIRKNYISFLLEQKNYDLLTKFLVSNTLYTPESIKTKNYEKWEKDVSLRKEEDLTSSFSPSRLSLLKKNSTLRINKSIKTNLQTKLMISLFRKRQKWTRDYKRASEKLWKKWKLRSKLISNKTLYLLSNDKTNELNLPQLRTQLYSDQKQEKIVAPVTNPNYYGKNISTLDKKFLQIIKLKKLTEIIKSQDGKKEEAQEGSKPKLASFSHSSFLSLSSFNHNNTVVKEKAFSSMNNSTLSYLNRFNYNSVIGKALKEAIEIQYVSQGKTEKKQLNGKKETPDVSFDNIKILKRNIDLKNIFNNNIFTKKMIKDMYKNSFKHKKLSIAGAFQSKKSSTSLWTNSFLDYKLQNRLDNRFYNTSRNKLKSDEMNTKLLTQTNLQLYQKNLIRRERSNIQNFVFMKKFLLNDYNSPLTRSQIRPLPGKRTKALYEKSTASGSYSSNLIRKNNPFLSSINDIDLKILAYKNRKWVESVKTDNNLFQEKVDGKKKVAKATFFPSLSVSKLNNNWKLFLNKIKKSPKLVSGQMDQTLQTKMINEQNLMKGVRLSAQLSPILTNAITNNISKNALKKEIKTVFLMNEKSAGTVLEDSSVLKNFVRQKLTKTILSKQKIINSLEKPTIIRITKSLRKRQQDRIVRSLLKRHLNLKSRRKLFLKTKEINNQRMSLDRKYEIEERLFLNKISYFAELKQLLDLNNNSLSKDSIFKGKNEFVLANKNLLKINSFKNENNVANRDNLGSEEWEKERSLSFFPSKASFFNSSLDFPSKQQNFQLTESGKFTKSKNLVENFVIWLSLSNNKNLDSFSPLTEFSERQMKEKSQSSRLFSITNRRNEKNIVKNLKNKKVTVSIIKNFQNKGKQMGERKKFQLFPFKSFFSSPHFIDMFYLRKKEGIFFTKEKISGNVAESEKMRAGDKQSYLSSIKRSSLFINKLLTNNQNNRQNQNNESYLSFKLKQNFVNFSVLENEKNILRRSLRKFISPNSMPPFLFEKMRRGGEDQFYKSTRKYSEKFKPITNATKRKNSFVNNFLLKNWIRLKNLQKEKEESFSSPLSFSYNLNNNKNNKTDIKEKNNRLLSSFVFEKMGQKNSSKEELINLNKYIIFARTNQNKLSRQQMRKKLKKRRIIRLKRNDRLKTLRDHPLKFRSEQIQTFYNIRDSLKKWKNFSFISSKVKYNKAFWTGYNNRQLFSNTSGLNSKANTFSFPQTNIQVATFNDNLESQSRNYKPLLDNGKKSRAFPASEACGKLGKNCIFPLEKVNKLKLIDFSHRSVQPLKSKNYLQSLNLQKSEELNQKAGAKTQDFYSASLPFLENTLSPFYTNGYLSFSDSFENKNILNSDLFYTLYQDIFINSPAFNKIGLKSKSTDFFFQTNQLENSLNSKLLVNNTNMPFYAGWDDSVRKFVLTNRLLTRKEAGYEISNIFNKKNESQKFDIYSSVDKKLNNTNNVVFSSWPLKGKNAATTLFSQFPFMTAPETNVNNSDKQIRVVKAGTKYIIEGLTNSTKFNKDTSSFDNKWIQKNKNHLIKDKNNIKEIKGSIASDFSPNINFKKNKRIKTIIKSSKNEDQIGIRQTGQVISNLATATSRKTARRALFSSRPWRSKRQTTKAILFSLSQKDNQSSLNVRKNPKLFLSLNSKKEFMDTKLSSKLLLLRNLRHGNRSQTKLAYLRRLQNFIRPTGSAWKTTLNLSRRKKQRIKQSNFFSSRFSVRKRKKRGNNKNPRLRGDKNYKKTKRQYRQKLYLRPKNKPLRRRSLGVAFQNKLNYWRRQYQNLSTNQNSGLKDKVQLLNKQALNCASTNPNCFNVPSEIDDFRGKFLGKKALAFFPKNDGKILFSQNLKENLVYSQKDNEWTSSRRPRKLYRSLFKNPSRQNPILYSTLPGHSRSIPIIKNLPLPGSSVKTLNRIIKWSSADGAARFYRVNLSYGWAMELFLQNLHQKIKSKNNYLINGNKSEAEVSAFPLIKEYLNQLVNTNKNKFSSSRVFKRRFYKLRQLSYTMSLRLYDRWFFYYYKTGNSGEQSNGNSNFQEKTGREPIPISTFSRNRFNNQIKQVVLAVPSLSSMEPDLSQFKHIKKFLTFHLNENQSNFRSYLKNLRTTSYLKTQSITTEITPKLSNSGITDNSNKIENYDSPLLGDARTKDFDGLESFKLVSTGREEAEASSPFSRQKPGFEKSDLSKSGQFPEDKMNLVKSNKTLLKKEKKYAEDRFFFAQFNKPPLVDDSRLTFENNRHFPLNGGFVWPGDYLRLKTILLPKEMKDLYLLEKNKNFNGKKSGAKAI</sequence>
<proteinExistence type="inferred from homology"/>